<organism>
    <name type="scientific">Mytilus edulis</name>
    <name type="common">Blue mussel</name>
    <dbReference type="NCBI Taxonomy" id="6550"/>
    <lineage>
        <taxon>Eukaryota</taxon>
        <taxon>Metazoa</taxon>
        <taxon>Spiralia</taxon>
        <taxon>Lophotrochozoa</taxon>
        <taxon>Mollusca</taxon>
        <taxon>Bivalvia</taxon>
        <taxon>Autobranchia</taxon>
        <taxon>Pteriomorphia</taxon>
        <taxon>Mytilida</taxon>
        <taxon>Mytiloidea</taxon>
        <taxon>Mytilidae</taxon>
        <taxon>Mytilinae</taxon>
        <taxon>Mytilus</taxon>
    </lineage>
</organism>
<comment type="function">
    <text>Tropomyosin, in association with the troponin complex, plays a central role in the calcium dependent regulation of muscle contraction.</text>
</comment>
<comment type="subunit">
    <text evidence="1">Homodimer.</text>
</comment>
<comment type="domain">
    <text>The molecule is in a coiled coil structure that is formed by 2 polypeptide chains. The sequence exhibits a prominent seven-residues periodicity.</text>
</comment>
<comment type="similarity">
    <text evidence="3">Belongs to the tropomyosin family.</text>
</comment>
<dbReference type="EMBL" id="U40035">
    <property type="protein sequence ID" value="AAA82259.1"/>
    <property type="molecule type" value="mRNA"/>
</dbReference>
<dbReference type="SMR" id="Q25457"/>
<dbReference type="Allergome" id="2131">
    <property type="allergen name" value="Myt e 1"/>
</dbReference>
<dbReference type="FunFam" id="1.20.5.170:FF:000001">
    <property type="entry name" value="Tropomyosin alpha-1 chain isoform 1"/>
    <property type="match status" value="1"/>
</dbReference>
<dbReference type="FunFam" id="1.20.5.340:FF:000001">
    <property type="entry name" value="Tropomyosin alpha-1 chain isoform 2"/>
    <property type="match status" value="1"/>
</dbReference>
<dbReference type="Gene3D" id="1.20.5.170">
    <property type="match status" value="2"/>
</dbReference>
<dbReference type="Gene3D" id="1.20.5.340">
    <property type="match status" value="1"/>
</dbReference>
<dbReference type="InterPro" id="IPR000533">
    <property type="entry name" value="Tropomyosin"/>
</dbReference>
<dbReference type="PANTHER" id="PTHR19269">
    <property type="entry name" value="TROPOMYOSIN"/>
    <property type="match status" value="1"/>
</dbReference>
<dbReference type="Pfam" id="PF00261">
    <property type="entry name" value="Tropomyosin"/>
    <property type="match status" value="1"/>
</dbReference>
<dbReference type="PRINTS" id="PR00194">
    <property type="entry name" value="TROPOMYOSIN"/>
</dbReference>
<dbReference type="SUPFAM" id="SSF57997">
    <property type="entry name" value="Tropomyosin"/>
    <property type="match status" value="1"/>
</dbReference>
<dbReference type="PROSITE" id="PS00326">
    <property type="entry name" value="TROPOMYOSIN"/>
    <property type="match status" value="1"/>
</dbReference>
<proteinExistence type="evidence at transcript level"/>
<feature type="chain" id="PRO_0000205669" description="Tropomyosin">
    <location>
        <begin position="1"/>
        <end position="284"/>
    </location>
</feature>
<feature type="region of interest" description="Disordered" evidence="2">
    <location>
        <begin position="32"/>
        <end position="60"/>
    </location>
</feature>
<feature type="coiled-coil region" evidence="1">
    <location>
        <begin position="1"/>
        <end position="284"/>
    </location>
</feature>
<feature type="compositionally biased region" description="Basic and acidic residues" evidence="2">
    <location>
        <begin position="32"/>
        <end position="41"/>
    </location>
</feature>
<feature type="compositionally biased region" description="Polar residues" evidence="2">
    <location>
        <begin position="44"/>
        <end position="60"/>
    </location>
</feature>
<protein>
    <recommendedName>
        <fullName>Tropomyosin</fullName>
    </recommendedName>
</protein>
<keyword id="KW-0175">Coiled coil</keyword>
<keyword id="KW-0677">Repeat</keyword>
<reference key="1">
    <citation type="submission" date="1995-11" db="EMBL/GenBank/DDBJ databases">
        <authorList>
            <person name="Nyitray L."/>
            <person name="Yang W."/>
            <person name="Szent-Gyorgyi A.G."/>
        </authorList>
    </citation>
    <scope>NUCLEOTIDE SEQUENCE [MRNA]</scope>
    <source>
        <tissue>Anterior byssus retractor muscle</tissue>
    </source>
</reference>
<name>TPM_MYTED</name>
<accession>Q25457</accession>
<sequence length="284" mass="32798">MDAIKKKMVAMKMEKENALDRAEQLEQKLRETEEAKAKIEDDYNSLQKKSIQTENDLDNTQTQLQDVQAKYETTEKQIAEHEQEIQSLTRKISMLEEDIMKSEERYTTAASKLEEASKAADESERNRKVLENLNCGNDERIDQLEKQLTEAKWIAEEADKKYEEAARKLAITEVDLERAEARLEAAEAKVIDLEEQLTVVGANIKTLQVQNDQASQREDSYEETIRDLTNRLKDAENRATEAERTVSKLRKEVDRLEDELLTEKEKYKAISDELDATFAELAGY</sequence>
<evidence type="ECO:0000250" key="1"/>
<evidence type="ECO:0000256" key="2">
    <source>
        <dbReference type="SAM" id="MobiDB-lite"/>
    </source>
</evidence>
<evidence type="ECO:0000305" key="3"/>